<keyword id="KW-1185">Reference proteome</keyword>
<keyword id="KW-0687">Ribonucleoprotein</keyword>
<keyword id="KW-0689">Ribosomal protein</keyword>
<keyword id="KW-0694">RNA-binding</keyword>
<keyword id="KW-0699">rRNA-binding</keyword>
<protein>
    <recommendedName>
        <fullName evidence="2">Small ribosomal subunit protein bS6</fullName>
    </recommendedName>
    <alternativeName>
        <fullName>30S ribosomal protein S6</fullName>
    </alternativeName>
</protein>
<reference key="1">
    <citation type="journal article" date="1999" name="Science">
        <title>Genome sequence of the radioresistant bacterium Deinococcus radiodurans R1.</title>
        <authorList>
            <person name="White O."/>
            <person name="Eisen J.A."/>
            <person name="Heidelberg J.F."/>
            <person name="Hickey E.K."/>
            <person name="Peterson J.D."/>
            <person name="Dodson R.J."/>
            <person name="Haft D.H."/>
            <person name="Gwinn M.L."/>
            <person name="Nelson W.C."/>
            <person name="Richardson D.L."/>
            <person name="Moffat K.S."/>
            <person name="Qin H."/>
            <person name="Jiang L."/>
            <person name="Pamphile W."/>
            <person name="Crosby M."/>
            <person name="Shen M."/>
            <person name="Vamathevan J.J."/>
            <person name="Lam P."/>
            <person name="McDonald L.A."/>
            <person name="Utterback T.R."/>
            <person name="Zalewski C."/>
            <person name="Makarova K.S."/>
            <person name="Aravind L."/>
            <person name="Daly M.J."/>
            <person name="Minton K.W."/>
            <person name="Fleischmann R.D."/>
            <person name="Ketchum K.A."/>
            <person name="Nelson K.E."/>
            <person name="Salzberg S.L."/>
            <person name="Smith H.O."/>
            <person name="Venter J.C."/>
            <person name="Fraser C.M."/>
        </authorList>
    </citation>
    <scope>NUCLEOTIDE SEQUENCE [LARGE SCALE GENOMIC DNA]</scope>
    <source>
        <strain>ATCC 13939 / DSM 20539 / JCM 16871 / CCUG 27074 / LMG 4051 / NBRC 15346 / NCIMB 9279 / VKM B-1422 / R1</strain>
    </source>
</reference>
<proteinExistence type="inferred from homology"/>
<comment type="function">
    <text evidence="1">Binds together with bS18 to 16S ribosomal RNA.</text>
</comment>
<comment type="similarity">
    <text evidence="2">Belongs to the bacterial ribosomal protein bS6 family.</text>
</comment>
<feature type="chain" id="PRO_0000176761" description="Small ribosomal subunit protein bS6">
    <location>
        <begin position="1"/>
        <end position="102"/>
    </location>
</feature>
<accession>Q9RY52</accession>
<name>RS6_DEIRA</name>
<gene>
    <name type="primary">rpsF</name>
    <name type="ordered locus">DR_0098</name>
</gene>
<organism>
    <name type="scientific">Deinococcus radiodurans (strain ATCC 13939 / DSM 20539 / JCM 16871 / CCUG 27074 / LMG 4051 / NBRC 15346 / NCIMB 9279 / VKM B-1422 / R1)</name>
    <dbReference type="NCBI Taxonomy" id="243230"/>
    <lineage>
        <taxon>Bacteria</taxon>
        <taxon>Thermotogati</taxon>
        <taxon>Deinococcota</taxon>
        <taxon>Deinococci</taxon>
        <taxon>Deinococcales</taxon>
        <taxon>Deinococcaceae</taxon>
        <taxon>Deinococcus</taxon>
    </lineage>
</organism>
<dbReference type="EMBL" id="AE000513">
    <property type="protein sequence ID" value="AAF09691.1"/>
    <property type="molecule type" value="Genomic_DNA"/>
</dbReference>
<dbReference type="PIR" id="H75558">
    <property type="entry name" value="H75558"/>
</dbReference>
<dbReference type="RefSeq" id="NP_293824.1">
    <property type="nucleotide sequence ID" value="NC_001263.1"/>
</dbReference>
<dbReference type="RefSeq" id="WP_010886746.1">
    <property type="nucleotide sequence ID" value="NC_001263.1"/>
</dbReference>
<dbReference type="SMR" id="Q9RY52"/>
<dbReference type="FunCoup" id="Q9RY52">
    <property type="interactions" value="357"/>
</dbReference>
<dbReference type="STRING" id="243230.DR_0098"/>
<dbReference type="PaxDb" id="243230-DR_0098"/>
<dbReference type="EnsemblBacteria" id="AAF09691">
    <property type="protein sequence ID" value="AAF09691"/>
    <property type="gene ID" value="DR_0098"/>
</dbReference>
<dbReference type="GeneID" id="69516329"/>
<dbReference type="KEGG" id="dra:DR_0098"/>
<dbReference type="PATRIC" id="fig|243230.17.peg.262"/>
<dbReference type="eggNOG" id="COG0360">
    <property type="taxonomic scope" value="Bacteria"/>
</dbReference>
<dbReference type="HOGENOM" id="CLU_113441_5_3_0"/>
<dbReference type="InParanoid" id="Q9RY52"/>
<dbReference type="OrthoDB" id="9812702at2"/>
<dbReference type="Proteomes" id="UP000002524">
    <property type="component" value="Chromosome 1"/>
</dbReference>
<dbReference type="GO" id="GO:0005737">
    <property type="term" value="C:cytoplasm"/>
    <property type="evidence" value="ECO:0007669"/>
    <property type="project" value="UniProtKB-ARBA"/>
</dbReference>
<dbReference type="GO" id="GO:1990904">
    <property type="term" value="C:ribonucleoprotein complex"/>
    <property type="evidence" value="ECO:0007669"/>
    <property type="project" value="UniProtKB-KW"/>
</dbReference>
<dbReference type="GO" id="GO:0005840">
    <property type="term" value="C:ribosome"/>
    <property type="evidence" value="ECO:0007669"/>
    <property type="project" value="UniProtKB-KW"/>
</dbReference>
<dbReference type="GO" id="GO:0070181">
    <property type="term" value="F:small ribosomal subunit rRNA binding"/>
    <property type="evidence" value="ECO:0000318"/>
    <property type="project" value="GO_Central"/>
</dbReference>
<dbReference type="GO" id="GO:0003735">
    <property type="term" value="F:structural constituent of ribosome"/>
    <property type="evidence" value="ECO:0000318"/>
    <property type="project" value="GO_Central"/>
</dbReference>
<dbReference type="GO" id="GO:0006412">
    <property type="term" value="P:translation"/>
    <property type="evidence" value="ECO:0007669"/>
    <property type="project" value="UniProtKB-UniRule"/>
</dbReference>
<dbReference type="CDD" id="cd00473">
    <property type="entry name" value="bS6"/>
    <property type="match status" value="1"/>
</dbReference>
<dbReference type="Gene3D" id="3.30.70.60">
    <property type="match status" value="1"/>
</dbReference>
<dbReference type="HAMAP" id="MF_00360">
    <property type="entry name" value="Ribosomal_bS6"/>
    <property type="match status" value="1"/>
</dbReference>
<dbReference type="InterPro" id="IPR000529">
    <property type="entry name" value="Ribosomal_bS6"/>
</dbReference>
<dbReference type="InterPro" id="IPR035980">
    <property type="entry name" value="Ribosomal_bS6_sf"/>
</dbReference>
<dbReference type="InterPro" id="IPR020814">
    <property type="entry name" value="Ribosomal_S6_plastid/chlpt"/>
</dbReference>
<dbReference type="InterPro" id="IPR014717">
    <property type="entry name" value="Transl_elong_EF1B/ribsomal_bS6"/>
</dbReference>
<dbReference type="NCBIfam" id="TIGR00166">
    <property type="entry name" value="S6"/>
    <property type="match status" value="1"/>
</dbReference>
<dbReference type="PANTHER" id="PTHR21011">
    <property type="entry name" value="MITOCHONDRIAL 28S RIBOSOMAL PROTEIN S6"/>
    <property type="match status" value="1"/>
</dbReference>
<dbReference type="PANTHER" id="PTHR21011:SF1">
    <property type="entry name" value="SMALL RIBOSOMAL SUBUNIT PROTEIN BS6M"/>
    <property type="match status" value="1"/>
</dbReference>
<dbReference type="Pfam" id="PF01250">
    <property type="entry name" value="Ribosomal_S6"/>
    <property type="match status" value="1"/>
</dbReference>
<dbReference type="SUPFAM" id="SSF54995">
    <property type="entry name" value="Ribosomal protein S6"/>
    <property type="match status" value="1"/>
</dbReference>
<evidence type="ECO:0000250" key="1"/>
<evidence type="ECO:0000305" key="2"/>
<sequence>MNQYDLNLILNPNISAEQVQTEKDYIENAVRNAGAEISNLDDLGNRRLAYQVGKDREGYYLMYTIKASGNPETAIASSLRLRDNVRRVLVVKDRPEWKTKKA</sequence>